<accession>Q7TSF1</accession>
<accession>Q7TQ60</accession>
<evidence type="ECO:0000250" key="1"/>
<evidence type="ECO:0000250" key="2">
    <source>
        <dbReference type="UniProtKB" id="Q02413"/>
    </source>
</evidence>
<evidence type="ECO:0000255" key="3"/>
<evidence type="ECO:0000255" key="4">
    <source>
        <dbReference type="PROSITE-ProRule" id="PRU00043"/>
    </source>
</evidence>
<evidence type="ECO:0000256" key="5">
    <source>
        <dbReference type="SAM" id="MobiDB-lite"/>
    </source>
</evidence>
<evidence type="ECO:0000269" key="6">
    <source>
    </source>
</evidence>
<evidence type="ECO:0000269" key="7">
    <source>
    </source>
</evidence>
<evidence type="ECO:0000269" key="8">
    <source>
    </source>
</evidence>
<evidence type="ECO:0000305" key="9"/>
<reference key="1">
    <citation type="journal article" date="2003" name="J. Invest. Dermatol.">
        <title>Genomic sequence analysis of the mouse desmoglein cluster reveals evidence for six distinct genes: characterization of mouse DSG4, DSG5, and DSG6.</title>
        <authorList>
            <person name="Whittock N.V."/>
        </authorList>
    </citation>
    <scope>NUCLEOTIDE SEQUENCE [MRNA]</scope>
    <scope>TISSUE SPECIFICITY</scope>
    <scope>DEVELOPMENTAL STAGE</scope>
    <source>
        <tissue>Skin</tissue>
    </source>
</reference>
<reference key="2">
    <citation type="journal article" date="2003" name="Exp. Dermatol.">
        <title>Novel member of the mouse desmoglein gene family: Dsg1-beta.</title>
        <authorList>
            <person name="Pulkkinen L."/>
            <person name="Choi Y.W."/>
            <person name="Kljuic A."/>
            <person name="Uitto J."/>
            <person name="Mahoney M.G."/>
        </authorList>
    </citation>
    <scope>NUCLEOTIDE SEQUENCE [MRNA]</scope>
    <scope>FUNCTION</scope>
    <scope>SUBCELLULAR LOCATION</scope>
    <scope>TISSUE SPECIFICITY</scope>
    <scope>DEVELOPMENTAL STAGE</scope>
    <source>
        <strain>PWK</strain>
        <tissue>Keratinocyte</tissue>
    </source>
</reference>
<reference key="3">
    <citation type="journal article" date="2005" name="Mol. Cell. Proteomics">
        <title>High throughput quantitative glycomics and glycoform-focused proteomics of murine dermis and epidermis.</title>
        <authorList>
            <person name="Uematsu R."/>
            <person name="Furukawa J."/>
            <person name="Nakagawa H."/>
            <person name="Shinohara Y."/>
            <person name="Deguchi K."/>
            <person name="Monde K."/>
            <person name="Nishimura S."/>
        </authorList>
    </citation>
    <scope>GLYCOSYLATION [LARGE SCALE ANALYSIS] AT ASN-110</scope>
    <source>
        <tissue>Epidermis</tissue>
    </source>
</reference>
<name>DSG1B_MOUSE</name>
<gene>
    <name type="primary">Dsg1b</name>
    <name type="synonym">Dsg5</name>
</gene>
<organism>
    <name type="scientific">Mus musculus</name>
    <name type="common">Mouse</name>
    <dbReference type="NCBI Taxonomy" id="10090"/>
    <lineage>
        <taxon>Eukaryota</taxon>
        <taxon>Metazoa</taxon>
        <taxon>Chordata</taxon>
        <taxon>Craniata</taxon>
        <taxon>Vertebrata</taxon>
        <taxon>Euteleostomi</taxon>
        <taxon>Mammalia</taxon>
        <taxon>Eutheria</taxon>
        <taxon>Euarchontoglires</taxon>
        <taxon>Glires</taxon>
        <taxon>Rodentia</taxon>
        <taxon>Myomorpha</taxon>
        <taxon>Muroidea</taxon>
        <taxon>Muridae</taxon>
        <taxon>Murinae</taxon>
        <taxon>Mus</taxon>
        <taxon>Mus</taxon>
    </lineage>
</organism>
<comment type="function">
    <text evidence="2 6">Component of intercellular desmosome junctions (PubMed:12631242). Involved in the interaction of plaque proteins and intermediate filaments mediating cell-cell adhesion (By similarity).</text>
</comment>
<comment type="subunit">
    <text evidence="2">Interacts with DSC3; there is evidence to suggest that the interaction promotes cell-cell adhesion of keratinocytes.</text>
</comment>
<comment type="subcellular location">
    <subcellularLocation>
        <location evidence="6">Cell membrane</location>
        <topology evidence="6">Single-pass type I membrane protein</topology>
    </subcellularLocation>
    <subcellularLocation>
        <location evidence="6">Cell junction</location>
        <location evidence="6">Desmosome</location>
    </subcellularLocation>
    <subcellularLocation>
        <location evidence="2">Cytoplasm</location>
    </subcellularLocation>
    <subcellularLocation>
        <location evidence="2">Nucleus</location>
    </subcellularLocation>
</comment>
<comment type="tissue specificity">
    <text evidence="6 7">Expressed in epidermis.</text>
</comment>
<comment type="developmental stage">
    <text evidence="6 7">Expressed in embryo at 17 dpc.</text>
</comment>
<comment type="domain">
    <text evidence="1">Three calcium ions are usually bound at the interface of each cadherin domain and rigidify the connections, imparting a strong curvature to the full-length ectodomain.</text>
</comment>
<proteinExistence type="evidence at protein level"/>
<keyword id="KW-0106">Calcium</keyword>
<keyword id="KW-0130">Cell adhesion</keyword>
<keyword id="KW-0965">Cell junction</keyword>
<keyword id="KW-1003">Cell membrane</keyword>
<keyword id="KW-0165">Cleavage on pair of basic residues</keyword>
<keyword id="KW-0963">Cytoplasm</keyword>
<keyword id="KW-0325">Glycoprotein</keyword>
<keyword id="KW-0472">Membrane</keyword>
<keyword id="KW-0479">Metal-binding</keyword>
<keyword id="KW-0539">Nucleus</keyword>
<keyword id="KW-1185">Reference proteome</keyword>
<keyword id="KW-0677">Repeat</keyword>
<keyword id="KW-0732">Signal</keyword>
<keyword id="KW-0812">Transmembrane</keyword>
<keyword id="KW-1133">Transmembrane helix</keyword>
<sequence length="1060" mass="114454">MDWHSFRIAALLLTSLVVLEVNSEFQIQVRDHNAKNGTIKWHSIRRQKREWIKFAAACREGEDNSKRNPIAKIHSDCAANQPVTYRISGVGIDQPPYGIFIINQKTGEINITSIVDREVTPFFIIYCRALNAQGQDLENPLELRVRVMDINDNPPVFSMTTFLGQIEENSNANTLVMKLNATDADEPNNLNSMIAFKIIRQEPSDSPMFIINRKTGEIRTMNNFLDREQYSQYSLVVRGSDRDGGADGMSAESECSITILDVNDNIPYLEQSSYDIEIEENALHSQLVQIRVIDLDEEFSDNWKAIIFFISGNEGNWFEIEMNERTNVGTLKVVKPLDYEAMKNLQLSIGVRNVAEFHQSIISQYRLTATMVTVTVLNVIEGSVFRPGSKTFVVDSRMEANHRVGEFVATDLDTGRASTNVRYEMGNNPENLLVVDSRTGIITLRNRVTMEQYQRLNGEYKGTVLSIDDSLQRTCTGTIVIELSGTGWVPGSDGGGSSSGSGGNRDPVTNGYQGTSTVGPQRVTGSGGVTSSGGGSGVNNTPGRQNPLDEPEPEPFDITEDNVHFGPAGIGLLIMGFLVLGLVPFLLICCDCGGAPGGGAGFEPVPECSDGAIHTWAIEGPQPEPHDGITTICVPQMPPGNANVIEYIDNSGVYTNEYCGREMQDLGGGERTTGFELMDGVKTSAAPEICQEYSGTLRRNSMRECRDGGLNMNFMESYFCQKAYAYADEDEGRPSNDCLLIYDIEGVGSPAGSVGCCSFIGEDLDESFLDTLGPKFKKLADISLGKEIDSYPDPDSSWPPQSTEPMCPQSTEPLGSGYPPISPHFGTTTVISENAYPSGPGVQHPLPIPDPLGYGNVTVRESYATSGTLKPSVHFHDNQQASNVVVTERVVGPVPGADLHGMLEIPDLRDGTNVIVTERVIAPGSSLPTSLTIPNPRETSNVVVTERVIQPTSGMIGNLSMTPELSSAQNVIVTERVVSGAGMSGIAGTAGLGGVGGIGSSGLVSTTMGAAGTGLNMGGTATIGHMRSSSDHHFSQTIGSASPNMARSRITKYSTVQYSK</sequence>
<protein>
    <recommendedName>
        <fullName>Desmoglein-1-beta</fullName>
        <shortName>Dsg1-beta</shortName>
    </recommendedName>
    <alternativeName>
        <fullName>Desmoglein-5</fullName>
    </alternativeName>
</protein>
<dbReference type="EMBL" id="AY192158">
    <property type="protein sequence ID" value="AAP31152.1"/>
    <property type="molecule type" value="mRNA"/>
</dbReference>
<dbReference type="EMBL" id="AY315940">
    <property type="protein sequence ID" value="AAP80571.1"/>
    <property type="molecule type" value="mRNA"/>
</dbReference>
<dbReference type="CCDS" id="CCDS29081.1"/>
<dbReference type="RefSeq" id="NP_859010.1">
    <property type="nucleotide sequence ID" value="NM_181682.2"/>
</dbReference>
<dbReference type="SMR" id="Q7TSF1"/>
<dbReference type="BioGRID" id="230374">
    <property type="interactions" value="4"/>
</dbReference>
<dbReference type="FunCoup" id="Q7TSF1">
    <property type="interactions" value="217"/>
</dbReference>
<dbReference type="IntAct" id="Q7TSF1">
    <property type="interactions" value="4"/>
</dbReference>
<dbReference type="MINT" id="Q7TSF1"/>
<dbReference type="STRING" id="10090.ENSMUSP00000076026"/>
<dbReference type="GlyCosmos" id="Q7TSF1">
    <property type="glycosylation" value="2 sites, No reported glycans"/>
</dbReference>
<dbReference type="GlyGen" id="Q7TSF1">
    <property type="glycosylation" value="3 sites, 1 N-linked glycan (1 site)"/>
</dbReference>
<dbReference type="iPTMnet" id="Q7TSF1"/>
<dbReference type="PhosphoSitePlus" id="Q7TSF1"/>
<dbReference type="PaxDb" id="10090-ENSMUSP00000076026"/>
<dbReference type="ProteomicsDB" id="277412"/>
<dbReference type="DNASU" id="225256"/>
<dbReference type="Ensembl" id="ENSMUST00000076737.7">
    <property type="protein sequence ID" value="ENSMUSP00000076026.7"/>
    <property type="gene ID" value="ENSMUSG00000061928.7"/>
</dbReference>
<dbReference type="GeneID" id="225256"/>
<dbReference type="KEGG" id="mmu:225256"/>
<dbReference type="UCSC" id="uc008eem.1">
    <property type="organism name" value="mouse"/>
</dbReference>
<dbReference type="AGR" id="MGI:2664357"/>
<dbReference type="CTD" id="225256"/>
<dbReference type="MGI" id="MGI:2664357">
    <property type="gene designation" value="Dsg1b"/>
</dbReference>
<dbReference type="VEuPathDB" id="HostDB:ENSMUSG00000061928"/>
<dbReference type="eggNOG" id="KOG3594">
    <property type="taxonomic scope" value="Eukaryota"/>
</dbReference>
<dbReference type="GeneTree" id="ENSGT01030000234624"/>
<dbReference type="HOGENOM" id="CLU_005284_0_0_1"/>
<dbReference type="InParanoid" id="Q7TSF1"/>
<dbReference type="OMA" id="HTWAIEG"/>
<dbReference type="OrthoDB" id="8961010at2759"/>
<dbReference type="PhylomeDB" id="Q7TSF1"/>
<dbReference type="TreeFam" id="TF331809"/>
<dbReference type="BioGRID-ORCS" id="225256">
    <property type="hits" value="1 hit in 80 CRISPR screens"/>
</dbReference>
<dbReference type="PRO" id="PR:Q7TSF1"/>
<dbReference type="Proteomes" id="UP000000589">
    <property type="component" value="Chromosome 18"/>
</dbReference>
<dbReference type="RNAct" id="Q7TSF1">
    <property type="molecule type" value="protein"/>
</dbReference>
<dbReference type="Bgee" id="ENSMUSG00000061928">
    <property type="expression patterns" value="Expressed in esophagus and 13 other cell types or tissues"/>
</dbReference>
<dbReference type="ExpressionAtlas" id="Q7TSF1">
    <property type="expression patterns" value="baseline and differential"/>
</dbReference>
<dbReference type="GO" id="GO:0005737">
    <property type="term" value="C:cytoplasm"/>
    <property type="evidence" value="ECO:0007669"/>
    <property type="project" value="UniProtKB-SubCell"/>
</dbReference>
<dbReference type="GO" id="GO:0030057">
    <property type="term" value="C:desmosome"/>
    <property type="evidence" value="ECO:0000314"/>
    <property type="project" value="MGI"/>
</dbReference>
<dbReference type="GO" id="GO:0005634">
    <property type="term" value="C:nucleus"/>
    <property type="evidence" value="ECO:0007669"/>
    <property type="project" value="UniProtKB-SubCell"/>
</dbReference>
<dbReference type="GO" id="GO:0005886">
    <property type="term" value="C:plasma membrane"/>
    <property type="evidence" value="ECO:0007669"/>
    <property type="project" value="UniProtKB-SubCell"/>
</dbReference>
<dbReference type="GO" id="GO:0005509">
    <property type="term" value="F:calcium ion binding"/>
    <property type="evidence" value="ECO:0007669"/>
    <property type="project" value="InterPro"/>
</dbReference>
<dbReference type="GO" id="GO:0007156">
    <property type="term" value="P:homophilic cell adhesion via plasma membrane adhesion molecules"/>
    <property type="evidence" value="ECO:0007669"/>
    <property type="project" value="InterPro"/>
</dbReference>
<dbReference type="CDD" id="cd11304">
    <property type="entry name" value="Cadherin_repeat"/>
    <property type="match status" value="4"/>
</dbReference>
<dbReference type="FunFam" id="2.60.40.60:FF:000011">
    <property type="entry name" value="Cadherin 1"/>
    <property type="match status" value="1"/>
</dbReference>
<dbReference type="FunFam" id="2.60.40.60:FF:000068">
    <property type="entry name" value="Desmoglein 1"/>
    <property type="match status" value="1"/>
</dbReference>
<dbReference type="FunFam" id="2.60.40.60:FF:000083">
    <property type="entry name" value="Desmoglein 1"/>
    <property type="match status" value="1"/>
</dbReference>
<dbReference type="FunFam" id="2.60.40.60:FF:000238">
    <property type="entry name" value="Desmoglein 1"/>
    <property type="match status" value="1"/>
</dbReference>
<dbReference type="FunFam" id="4.10.900.10:FF:000003">
    <property type="entry name" value="Desmoglein 1"/>
    <property type="match status" value="1"/>
</dbReference>
<dbReference type="Gene3D" id="2.60.40.60">
    <property type="entry name" value="Cadherins"/>
    <property type="match status" value="4"/>
</dbReference>
<dbReference type="Gene3D" id="4.10.900.10">
    <property type="entry name" value="TCF3-CBD (Catenin binding domain)"/>
    <property type="match status" value="1"/>
</dbReference>
<dbReference type="InterPro" id="IPR050971">
    <property type="entry name" value="Cadherin-domain_protein"/>
</dbReference>
<dbReference type="InterPro" id="IPR002126">
    <property type="entry name" value="Cadherin-like_dom"/>
</dbReference>
<dbReference type="InterPro" id="IPR015919">
    <property type="entry name" value="Cadherin-like_sf"/>
</dbReference>
<dbReference type="InterPro" id="IPR020894">
    <property type="entry name" value="Cadherin_CS"/>
</dbReference>
<dbReference type="InterPro" id="IPR000233">
    <property type="entry name" value="Cadherin_Y-type_LIR"/>
</dbReference>
<dbReference type="InterPro" id="IPR027397">
    <property type="entry name" value="Catenin-bd_sf"/>
</dbReference>
<dbReference type="InterPro" id="IPR009122">
    <property type="entry name" value="Desmosomal_cadherin"/>
</dbReference>
<dbReference type="PANTHER" id="PTHR24025">
    <property type="entry name" value="DESMOGLEIN FAMILY MEMBER"/>
    <property type="match status" value="1"/>
</dbReference>
<dbReference type="PANTHER" id="PTHR24025:SF9">
    <property type="entry name" value="DESMOGLEIN-1"/>
    <property type="match status" value="1"/>
</dbReference>
<dbReference type="Pfam" id="PF01049">
    <property type="entry name" value="CADH_Y-type_LIR"/>
    <property type="match status" value="1"/>
</dbReference>
<dbReference type="Pfam" id="PF00028">
    <property type="entry name" value="Cadherin"/>
    <property type="match status" value="3"/>
</dbReference>
<dbReference type="PRINTS" id="PR00205">
    <property type="entry name" value="CADHERIN"/>
</dbReference>
<dbReference type="PRINTS" id="PR01818">
    <property type="entry name" value="DESMOCADHERN"/>
</dbReference>
<dbReference type="PRINTS" id="PR01819">
    <property type="entry name" value="DESMOGLEIN"/>
</dbReference>
<dbReference type="SMART" id="SM00112">
    <property type="entry name" value="CA"/>
    <property type="match status" value="4"/>
</dbReference>
<dbReference type="SUPFAM" id="SSF49313">
    <property type="entry name" value="Cadherin-like"/>
    <property type="match status" value="4"/>
</dbReference>
<dbReference type="PROSITE" id="PS00232">
    <property type="entry name" value="CADHERIN_1"/>
    <property type="match status" value="2"/>
</dbReference>
<dbReference type="PROSITE" id="PS50268">
    <property type="entry name" value="CADHERIN_2"/>
    <property type="match status" value="4"/>
</dbReference>
<feature type="signal peptide" evidence="3">
    <location>
        <begin position="1"/>
        <end position="23"/>
    </location>
</feature>
<feature type="propeptide" id="PRO_0000003841" evidence="3">
    <location>
        <begin position="24"/>
        <end position="49"/>
    </location>
</feature>
<feature type="chain" id="PRO_0000003842" description="Desmoglein-1-beta">
    <location>
        <begin position="50"/>
        <end position="1060"/>
    </location>
</feature>
<feature type="topological domain" description="Extracellular" evidence="3">
    <location>
        <begin position="50"/>
        <end position="567"/>
    </location>
</feature>
<feature type="transmembrane region" description="Helical" evidence="3">
    <location>
        <begin position="568"/>
        <end position="588"/>
    </location>
</feature>
<feature type="topological domain" description="Cytoplasmic" evidence="3">
    <location>
        <begin position="589"/>
        <end position="1060"/>
    </location>
</feature>
<feature type="domain" description="Cadherin 1" evidence="4">
    <location>
        <begin position="50"/>
        <end position="157"/>
    </location>
</feature>
<feature type="domain" description="Cadherin 2" evidence="4">
    <location>
        <begin position="158"/>
        <end position="269"/>
    </location>
</feature>
<feature type="domain" description="Cadherin 3" evidence="4">
    <location>
        <begin position="270"/>
        <end position="389"/>
    </location>
</feature>
<feature type="domain" description="Cadherin 4" evidence="4">
    <location>
        <begin position="386"/>
        <end position="493"/>
    </location>
</feature>
<feature type="repeat" description="Desmoglein repeat 1">
    <location>
        <begin position="835"/>
        <end position="861"/>
    </location>
</feature>
<feature type="repeat" description="Desmoglein repeat 2">
    <location>
        <begin position="862"/>
        <end position="891"/>
    </location>
</feature>
<feature type="repeat" description="Desmoglein repeat 3">
    <location>
        <begin position="892"/>
        <end position="921"/>
    </location>
</feature>
<feature type="repeat" description="Desmoglein repeat 4">
    <location>
        <begin position="922"/>
        <end position="949"/>
    </location>
</feature>
<feature type="repeat" description="Desmoglein repeat 5">
    <location>
        <begin position="950"/>
        <end position="978"/>
    </location>
</feature>
<feature type="region of interest" description="Disordered" evidence="5">
    <location>
        <begin position="490"/>
        <end position="560"/>
    </location>
</feature>
<feature type="region of interest" description="Disordered" evidence="5">
    <location>
        <begin position="792"/>
        <end position="811"/>
    </location>
</feature>
<feature type="compositionally biased region" description="Gly residues" evidence="5">
    <location>
        <begin position="492"/>
        <end position="503"/>
    </location>
</feature>
<feature type="compositionally biased region" description="Polar residues" evidence="5">
    <location>
        <begin position="510"/>
        <end position="519"/>
    </location>
</feature>
<feature type="compositionally biased region" description="Gly residues" evidence="5">
    <location>
        <begin position="525"/>
        <end position="537"/>
    </location>
</feature>
<feature type="compositionally biased region" description="Acidic residues" evidence="5">
    <location>
        <begin position="549"/>
        <end position="560"/>
    </location>
</feature>
<feature type="compositionally biased region" description="Low complexity" evidence="5">
    <location>
        <begin position="792"/>
        <end position="801"/>
    </location>
</feature>
<feature type="glycosylation site" description="N-linked (GlcNAc...) (high mannose) asparagine" evidence="8">
    <location>
        <position position="110"/>
    </location>
</feature>
<feature type="glycosylation site" description="N-linked (GlcNAc...) asparagine" evidence="3">
    <location>
        <position position="180"/>
    </location>
</feature>
<feature type="sequence conflict" description="In Ref. 2; AAP80571." evidence="9" ref="2">
    <original>T</original>
    <variation>N</variation>
    <location>
        <position position="929"/>
    </location>
</feature>
<feature type="sequence conflict" description="In Ref. 2; AAP80571." evidence="9" ref="2">
    <original>I</original>
    <variation>V</variation>
    <location>
        <position position="1038"/>
    </location>
</feature>